<keyword id="KW-1185">Reference proteome</keyword>
<keyword id="KW-0687">Ribonucleoprotein</keyword>
<keyword id="KW-0689">Ribosomal protein</keyword>
<keyword id="KW-0694">RNA-binding</keyword>
<keyword id="KW-0699">rRNA-binding</keyword>
<name>RL9_NATTJ</name>
<protein>
    <recommendedName>
        <fullName evidence="1">Large ribosomal subunit protein bL9</fullName>
    </recommendedName>
    <alternativeName>
        <fullName evidence="2">50S ribosomal protein L9</fullName>
    </alternativeName>
</protein>
<feature type="chain" id="PRO_1000126944" description="Large ribosomal subunit protein bL9">
    <location>
        <begin position="1"/>
        <end position="147"/>
    </location>
</feature>
<sequence length="147" mass="16725">MKVILKQDVKKLGTAGEVKEVSDGYARNFLIPRGIAVEASKGHMKDLELQRKQEEERQQKLKEEAEELKQKLDNEKVVIYQKTGDEGKLFGSVTNKDVAEELKSKGYTVEKKKIEMEPIKSLGTHKVHVKLHPEVTVDIDVQVSEKK</sequence>
<dbReference type="EMBL" id="CP001034">
    <property type="protein sequence ID" value="ACB86457.1"/>
    <property type="molecule type" value="Genomic_DNA"/>
</dbReference>
<dbReference type="RefSeq" id="WP_012449289.1">
    <property type="nucleotide sequence ID" value="NC_010718.1"/>
</dbReference>
<dbReference type="SMR" id="B2A451"/>
<dbReference type="FunCoup" id="B2A451">
    <property type="interactions" value="501"/>
</dbReference>
<dbReference type="STRING" id="457570.Nther_2911"/>
<dbReference type="KEGG" id="nth:Nther_2911"/>
<dbReference type="eggNOG" id="COG0359">
    <property type="taxonomic scope" value="Bacteria"/>
</dbReference>
<dbReference type="HOGENOM" id="CLU_078938_3_0_9"/>
<dbReference type="InParanoid" id="B2A451"/>
<dbReference type="OrthoDB" id="9788336at2"/>
<dbReference type="Proteomes" id="UP000001683">
    <property type="component" value="Chromosome"/>
</dbReference>
<dbReference type="GO" id="GO:1990904">
    <property type="term" value="C:ribonucleoprotein complex"/>
    <property type="evidence" value="ECO:0007669"/>
    <property type="project" value="UniProtKB-KW"/>
</dbReference>
<dbReference type="GO" id="GO:0005840">
    <property type="term" value="C:ribosome"/>
    <property type="evidence" value="ECO:0007669"/>
    <property type="project" value="UniProtKB-KW"/>
</dbReference>
<dbReference type="GO" id="GO:0019843">
    <property type="term" value="F:rRNA binding"/>
    <property type="evidence" value="ECO:0007669"/>
    <property type="project" value="UniProtKB-UniRule"/>
</dbReference>
<dbReference type="GO" id="GO:0003735">
    <property type="term" value="F:structural constituent of ribosome"/>
    <property type="evidence" value="ECO:0007669"/>
    <property type="project" value="InterPro"/>
</dbReference>
<dbReference type="GO" id="GO:0006412">
    <property type="term" value="P:translation"/>
    <property type="evidence" value="ECO:0007669"/>
    <property type="project" value="UniProtKB-UniRule"/>
</dbReference>
<dbReference type="FunFam" id="3.40.5.10:FF:000002">
    <property type="entry name" value="50S ribosomal protein L9"/>
    <property type="match status" value="1"/>
</dbReference>
<dbReference type="Gene3D" id="3.10.430.100">
    <property type="entry name" value="Ribosomal protein L9, C-terminal domain"/>
    <property type="match status" value="1"/>
</dbReference>
<dbReference type="Gene3D" id="3.40.5.10">
    <property type="entry name" value="Ribosomal protein L9, N-terminal domain"/>
    <property type="match status" value="1"/>
</dbReference>
<dbReference type="HAMAP" id="MF_00503">
    <property type="entry name" value="Ribosomal_bL9"/>
    <property type="match status" value="1"/>
</dbReference>
<dbReference type="InterPro" id="IPR000244">
    <property type="entry name" value="Ribosomal_bL9"/>
</dbReference>
<dbReference type="InterPro" id="IPR009027">
    <property type="entry name" value="Ribosomal_bL9/RNase_H1_N"/>
</dbReference>
<dbReference type="InterPro" id="IPR020594">
    <property type="entry name" value="Ribosomal_bL9_bac/chp"/>
</dbReference>
<dbReference type="InterPro" id="IPR020069">
    <property type="entry name" value="Ribosomal_bL9_C"/>
</dbReference>
<dbReference type="InterPro" id="IPR036791">
    <property type="entry name" value="Ribosomal_bL9_C_sf"/>
</dbReference>
<dbReference type="InterPro" id="IPR020070">
    <property type="entry name" value="Ribosomal_bL9_N"/>
</dbReference>
<dbReference type="InterPro" id="IPR036935">
    <property type="entry name" value="Ribosomal_bL9_N_sf"/>
</dbReference>
<dbReference type="NCBIfam" id="TIGR00158">
    <property type="entry name" value="L9"/>
    <property type="match status" value="1"/>
</dbReference>
<dbReference type="PANTHER" id="PTHR21368">
    <property type="entry name" value="50S RIBOSOMAL PROTEIN L9"/>
    <property type="match status" value="1"/>
</dbReference>
<dbReference type="Pfam" id="PF03948">
    <property type="entry name" value="Ribosomal_L9_C"/>
    <property type="match status" value="1"/>
</dbReference>
<dbReference type="Pfam" id="PF01281">
    <property type="entry name" value="Ribosomal_L9_N"/>
    <property type="match status" value="1"/>
</dbReference>
<dbReference type="SUPFAM" id="SSF55658">
    <property type="entry name" value="L9 N-domain-like"/>
    <property type="match status" value="1"/>
</dbReference>
<dbReference type="SUPFAM" id="SSF55653">
    <property type="entry name" value="Ribosomal protein L9 C-domain"/>
    <property type="match status" value="1"/>
</dbReference>
<dbReference type="PROSITE" id="PS00651">
    <property type="entry name" value="RIBOSOMAL_L9"/>
    <property type="match status" value="1"/>
</dbReference>
<evidence type="ECO:0000255" key="1">
    <source>
        <dbReference type="HAMAP-Rule" id="MF_00503"/>
    </source>
</evidence>
<evidence type="ECO:0000305" key="2"/>
<organism>
    <name type="scientific">Natranaerobius thermophilus (strain ATCC BAA-1301 / DSM 18059 / JW/NM-WN-LF)</name>
    <dbReference type="NCBI Taxonomy" id="457570"/>
    <lineage>
        <taxon>Bacteria</taxon>
        <taxon>Bacillati</taxon>
        <taxon>Bacillota</taxon>
        <taxon>Clostridia</taxon>
        <taxon>Natranaerobiales</taxon>
        <taxon>Natranaerobiaceae</taxon>
        <taxon>Natranaerobius</taxon>
    </lineage>
</organism>
<reference key="1">
    <citation type="submission" date="2008-04" db="EMBL/GenBank/DDBJ databases">
        <title>Complete sequence of chromosome of Natranaerobius thermophilus JW/NM-WN-LF.</title>
        <authorList>
            <consortium name="US DOE Joint Genome Institute"/>
            <person name="Copeland A."/>
            <person name="Lucas S."/>
            <person name="Lapidus A."/>
            <person name="Glavina del Rio T."/>
            <person name="Dalin E."/>
            <person name="Tice H."/>
            <person name="Bruce D."/>
            <person name="Goodwin L."/>
            <person name="Pitluck S."/>
            <person name="Chertkov O."/>
            <person name="Brettin T."/>
            <person name="Detter J.C."/>
            <person name="Han C."/>
            <person name="Kuske C.R."/>
            <person name="Schmutz J."/>
            <person name="Larimer F."/>
            <person name="Land M."/>
            <person name="Hauser L."/>
            <person name="Kyrpides N."/>
            <person name="Lykidis A."/>
            <person name="Mesbah N.M."/>
            <person name="Wiegel J."/>
        </authorList>
    </citation>
    <scope>NUCLEOTIDE SEQUENCE [LARGE SCALE GENOMIC DNA]</scope>
    <source>
        <strain>ATCC BAA-1301 / DSM 18059 / JW/NM-WN-LF</strain>
    </source>
</reference>
<accession>B2A451</accession>
<proteinExistence type="inferred from homology"/>
<comment type="function">
    <text evidence="1">Binds to the 23S rRNA.</text>
</comment>
<comment type="similarity">
    <text evidence="1">Belongs to the bacterial ribosomal protein bL9 family.</text>
</comment>
<gene>
    <name evidence="1" type="primary">rplI</name>
    <name type="ordered locus">Nther_2911</name>
</gene>